<accession>Q9N392</accession>
<proteinExistence type="evidence at protein level"/>
<protein>
    <recommendedName>
        <fullName>Probable cytosolic Fe-S cluster assembly factor oxy-4</fullName>
    </recommendedName>
</protein>
<organism>
    <name type="scientific">Caenorhabditis elegans</name>
    <dbReference type="NCBI Taxonomy" id="6239"/>
    <lineage>
        <taxon>Eukaryota</taxon>
        <taxon>Metazoa</taxon>
        <taxon>Ecdysozoa</taxon>
        <taxon>Nematoda</taxon>
        <taxon>Chromadorea</taxon>
        <taxon>Rhabditida</taxon>
        <taxon>Rhabditina</taxon>
        <taxon>Rhabditomorpha</taxon>
        <taxon>Rhabditoidea</taxon>
        <taxon>Rhabditidae</taxon>
        <taxon>Peloderinae</taxon>
        <taxon>Caenorhabditis</taxon>
    </lineage>
</organism>
<sequence length="457" mass="50824">MEDSGFSGVVRLSNVSDFIAPNLDCIIPLETRTVEKKKEESQVNIRTKKPKDKESSKTEEKKSVKISLADCLACSGCITSAETVLVEEQSFGRVYEGIQNSKLSVVTVSPQAITSIAVKIGKSTNEVAKIIASFFRRLGVKYVIDSSFARKFAHSLIYEELSTTPSTSRPLLSSACPGFVCYAEKSHGELLIPKISKIRSPQAISGAIIKGFLAKREGLSPCDVFHAAVMPCFDKKLEASREQFKVDGTDVRETDCVISTAELLEEIIKLENDEAGDVENRSEEEQWLSALSKGSVIGDDGGASGGYADRIVRDFVLENGGGIVKTSKLNKNMFSTTVESEAGEILLRVAKVYGFRNVQNLVRKMKTKKEKTDYVEIMACPGGCANGGGQIRYETMDEREEKLIKVEALYEDLPRQDDEETWIKVREEWEKLDKNYRNLLFTDYRPVETNVAQVLKW</sequence>
<name>NARF_CAEEL</name>
<dbReference type="EMBL" id="FO081201">
    <property type="protein sequence ID" value="CCD69851.1"/>
    <property type="molecule type" value="Genomic_DNA"/>
</dbReference>
<dbReference type="RefSeq" id="NP_498092.4">
    <property type="nucleotide sequence ID" value="NM_065691.5"/>
</dbReference>
<dbReference type="SMR" id="Q9N392"/>
<dbReference type="BioGRID" id="40933">
    <property type="interactions" value="2"/>
</dbReference>
<dbReference type="FunCoup" id="Q9N392">
    <property type="interactions" value="1862"/>
</dbReference>
<dbReference type="IntAct" id="Q9N392">
    <property type="interactions" value="1"/>
</dbReference>
<dbReference type="STRING" id="6239.Y54H5A.4.1"/>
<dbReference type="PaxDb" id="6239-Y54H5A.4"/>
<dbReference type="PeptideAtlas" id="Q9N392"/>
<dbReference type="EnsemblMetazoa" id="Y54H5A.4.1">
    <property type="protein sequence ID" value="Y54H5A.4.1"/>
    <property type="gene ID" value="WBGene00021902"/>
</dbReference>
<dbReference type="GeneID" id="175702"/>
<dbReference type="KEGG" id="cel:CELE_Y54H5A.4"/>
<dbReference type="UCSC" id="Y54H5A.4.1">
    <property type="organism name" value="c. elegans"/>
</dbReference>
<dbReference type="AGR" id="WB:WBGene00021902"/>
<dbReference type="CTD" id="175702"/>
<dbReference type="WormBase" id="Y54H5A.4">
    <property type="protein sequence ID" value="CE29883"/>
    <property type="gene ID" value="WBGene00021902"/>
    <property type="gene designation" value="oxy-4"/>
</dbReference>
<dbReference type="eggNOG" id="KOG2439">
    <property type="taxonomic scope" value="Eukaryota"/>
</dbReference>
<dbReference type="GeneTree" id="ENSGT00940000153514"/>
<dbReference type="HOGENOM" id="CLU_018240_0_0_1"/>
<dbReference type="InParanoid" id="Q9N392"/>
<dbReference type="OMA" id="INIPHLC"/>
<dbReference type="OrthoDB" id="10253113at2759"/>
<dbReference type="PhylomeDB" id="Q9N392"/>
<dbReference type="PRO" id="PR:Q9N392"/>
<dbReference type="Proteomes" id="UP000001940">
    <property type="component" value="Chromosome III"/>
</dbReference>
<dbReference type="Bgee" id="WBGene00021902">
    <property type="expression patterns" value="Expressed in germ line (C elegans) and 4 other cell types or tissues"/>
</dbReference>
<dbReference type="GO" id="GO:0097361">
    <property type="term" value="C:cytosolic [4Fe-4S] assembly targeting complex"/>
    <property type="evidence" value="ECO:0000318"/>
    <property type="project" value="GO_Central"/>
</dbReference>
<dbReference type="GO" id="GO:0051539">
    <property type="term" value="F:4 iron, 4 sulfur cluster binding"/>
    <property type="evidence" value="ECO:0007669"/>
    <property type="project" value="UniProtKB-KW"/>
</dbReference>
<dbReference type="GO" id="GO:0046872">
    <property type="term" value="F:metal ion binding"/>
    <property type="evidence" value="ECO:0007669"/>
    <property type="project" value="UniProtKB-KW"/>
</dbReference>
<dbReference type="GO" id="GO:0016226">
    <property type="term" value="P:iron-sulfur cluster assembly"/>
    <property type="evidence" value="ECO:0000250"/>
    <property type="project" value="UniProtKB"/>
</dbReference>
<dbReference type="FunFam" id="3.30.70.20:FF:000042">
    <property type="entry name" value="Cytosolic Fe-S cluster assembly factor NAR1"/>
    <property type="match status" value="1"/>
</dbReference>
<dbReference type="Gene3D" id="3.40.50.1780">
    <property type="match status" value="1"/>
</dbReference>
<dbReference type="Gene3D" id="3.40.950.10">
    <property type="entry name" value="Fe-only Hydrogenase (Larger Subunit), Chain L, domain 3"/>
    <property type="match status" value="1"/>
</dbReference>
<dbReference type="InterPro" id="IPR050340">
    <property type="entry name" value="Cytosolic_Fe-S_CAF"/>
</dbReference>
<dbReference type="InterPro" id="IPR009016">
    <property type="entry name" value="Fe_hydrogenase"/>
</dbReference>
<dbReference type="InterPro" id="IPR004108">
    <property type="entry name" value="Fe_hydrogenase_lsu_C"/>
</dbReference>
<dbReference type="PANTHER" id="PTHR11615">
    <property type="entry name" value="NITRATE, FORMATE, IRON DEHYDROGENASE"/>
    <property type="match status" value="1"/>
</dbReference>
<dbReference type="Pfam" id="PF02906">
    <property type="entry name" value="Fe_hyd_lg_C"/>
    <property type="match status" value="1"/>
</dbReference>
<dbReference type="SUPFAM" id="SSF53920">
    <property type="entry name" value="Fe-only hydrogenase"/>
    <property type="match status" value="1"/>
</dbReference>
<evidence type="ECO:0000250" key="1"/>
<evidence type="ECO:0000255" key="2"/>
<evidence type="ECO:0000256" key="3">
    <source>
        <dbReference type="SAM" id="MobiDB-lite"/>
    </source>
</evidence>
<evidence type="ECO:0000269" key="4">
    <source>
    </source>
</evidence>
<evidence type="ECO:0000305" key="5"/>
<keyword id="KW-0004">4Fe-4S</keyword>
<keyword id="KW-0408">Iron</keyword>
<keyword id="KW-0411">Iron-sulfur</keyword>
<keyword id="KW-0479">Metal-binding</keyword>
<keyword id="KW-1185">Reference proteome</keyword>
<gene>
    <name type="primary">oxy-4</name>
    <name type="ORF">Y54H5A.4</name>
</gene>
<feature type="chain" id="PRO_0000383695" description="Probable cytosolic Fe-S cluster assembly factor oxy-4">
    <location>
        <begin position="1"/>
        <end position="457"/>
    </location>
</feature>
<feature type="region of interest" description="Disordered" evidence="3">
    <location>
        <begin position="38"/>
        <end position="59"/>
    </location>
</feature>
<feature type="binding site" evidence="2">
    <location>
        <position position="25"/>
    </location>
    <ligand>
        <name>[4Fe-4S] cluster</name>
        <dbReference type="ChEBI" id="CHEBI:49883"/>
        <label>1</label>
    </ligand>
</feature>
<feature type="binding site" evidence="2">
    <location>
        <position position="71"/>
    </location>
    <ligand>
        <name>[4Fe-4S] cluster</name>
        <dbReference type="ChEBI" id="CHEBI:49883"/>
        <label>1</label>
    </ligand>
</feature>
<feature type="binding site" evidence="2">
    <location>
        <position position="74"/>
    </location>
    <ligand>
        <name>[4Fe-4S] cluster</name>
        <dbReference type="ChEBI" id="CHEBI:49883"/>
        <label>1</label>
    </ligand>
</feature>
<feature type="binding site" evidence="2">
    <location>
        <position position="77"/>
    </location>
    <ligand>
        <name>[4Fe-4S] cluster</name>
        <dbReference type="ChEBI" id="CHEBI:49883"/>
        <label>1</label>
    </ligand>
</feature>
<feature type="binding site" evidence="2">
    <location>
        <position position="176"/>
    </location>
    <ligand>
        <name>[4Fe-4S] cluster</name>
        <dbReference type="ChEBI" id="CHEBI:49883"/>
        <label>2</label>
    </ligand>
</feature>
<feature type="binding site" evidence="2">
    <location>
        <position position="232"/>
    </location>
    <ligand>
        <name>[4Fe-4S] cluster</name>
        <dbReference type="ChEBI" id="CHEBI:49883"/>
        <label>2</label>
    </ligand>
</feature>
<feature type="binding site" evidence="2">
    <location>
        <position position="380"/>
    </location>
    <ligand>
        <name>[4Fe-4S] cluster</name>
        <dbReference type="ChEBI" id="CHEBI:49883"/>
        <label>2</label>
    </ligand>
</feature>
<feature type="binding site" evidence="2">
    <location>
        <position position="384"/>
    </location>
    <ligand>
        <name>[4Fe-4S] cluster</name>
        <dbReference type="ChEBI" id="CHEBI:49883"/>
        <label>2</label>
    </ligand>
</feature>
<feature type="mutagenesis site" description="In allele qa5001; increased sensitivity to oxygen." evidence="4">
    <original>D</original>
    <variation>N</variation>
    <location>
        <position position="373"/>
    </location>
</feature>
<comment type="function">
    <text evidence="1">Component of the cytosolic iron-sulfur (Fe/S) protein assembly machinery. Required for maturation of extramitochondrial Fe/S proteins (By similarity).</text>
</comment>
<comment type="disruption phenotype">
    <text evidence="4">Arrest at the L2-L3 stage in 90% oxygen.</text>
</comment>
<comment type="similarity">
    <text evidence="5">Belongs to the NARF family.</text>
</comment>
<reference key="1">
    <citation type="journal article" date="1998" name="Science">
        <title>Genome sequence of the nematode C. elegans: a platform for investigating biology.</title>
        <authorList>
            <consortium name="The C. elegans sequencing consortium"/>
        </authorList>
    </citation>
    <scope>NUCLEOTIDE SEQUENCE [LARGE SCALE GENOMIC DNA]</scope>
    <source>
        <strain>Bristol N2</strain>
    </source>
</reference>
<reference key="2">
    <citation type="journal article" date="2009" name="Genes Cells">
        <title>[FeFe]-hydrogenase-like gene is involved in the regulation of sensitivity to oxygen in yeast and nematode.</title>
        <authorList>
            <person name="Fujii M."/>
            <person name="Adachi N."/>
            <person name="Shikatani K."/>
            <person name="Ayusawa D."/>
        </authorList>
    </citation>
    <scope>DISRUPTION PHENOTYPE</scope>
    <scope>MUTAGENESIS OF ASP-373</scope>
</reference>